<evidence type="ECO:0000255" key="1">
    <source>
        <dbReference type="HAMAP-Rule" id="MF_00258"/>
    </source>
</evidence>
<name>MURI_SODGM</name>
<keyword id="KW-0133">Cell shape</keyword>
<keyword id="KW-0961">Cell wall biogenesis/degradation</keyword>
<keyword id="KW-0413">Isomerase</keyword>
<keyword id="KW-0573">Peptidoglycan synthesis</keyword>
<organism>
    <name type="scientific">Sodalis glossinidius (strain morsitans)</name>
    <dbReference type="NCBI Taxonomy" id="343509"/>
    <lineage>
        <taxon>Bacteria</taxon>
        <taxon>Pseudomonadati</taxon>
        <taxon>Pseudomonadota</taxon>
        <taxon>Gammaproteobacteria</taxon>
        <taxon>Enterobacterales</taxon>
        <taxon>Bruguierivoracaceae</taxon>
        <taxon>Sodalis</taxon>
    </lineage>
</organism>
<reference key="1">
    <citation type="journal article" date="2006" name="Genome Res.">
        <title>Massive genome erosion and functional adaptations provide insights into the symbiotic lifestyle of Sodalis glossinidius in the tsetse host.</title>
        <authorList>
            <person name="Toh H."/>
            <person name="Weiss B.L."/>
            <person name="Perkin S.A.H."/>
            <person name="Yamashita A."/>
            <person name="Oshima K."/>
            <person name="Hattori M."/>
            <person name="Aksoy S."/>
        </authorList>
    </citation>
    <scope>NUCLEOTIDE SEQUENCE [LARGE SCALE GENOMIC DNA]</scope>
    <source>
        <strain>morsitans</strain>
    </source>
</reference>
<gene>
    <name evidence="1" type="primary">murI</name>
    <name type="ordered locus">SG2153</name>
</gene>
<comment type="function">
    <text evidence="1">Provides the (R)-glutamate required for cell wall biosynthesis.</text>
</comment>
<comment type="catalytic activity">
    <reaction evidence="1">
        <text>L-glutamate = D-glutamate</text>
        <dbReference type="Rhea" id="RHEA:12813"/>
        <dbReference type="ChEBI" id="CHEBI:29985"/>
        <dbReference type="ChEBI" id="CHEBI:29986"/>
        <dbReference type="EC" id="5.1.1.3"/>
    </reaction>
</comment>
<comment type="pathway">
    <text evidence="1">Cell wall biogenesis; peptidoglycan biosynthesis.</text>
</comment>
<comment type="similarity">
    <text evidence="1">Belongs to the aspartate/glutamate racemases family.</text>
</comment>
<proteinExistence type="inferred from homology"/>
<protein>
    <recommendedName>
        <fullName evidence="1">Glutamate racemase</fullName>
        <ecNumber evidence="1">5.1.1.3</ecNumber>
    </recommendedName>
</protein>
<dbReference type="EC" id="5.1.1.3" evidence="1"/>
<dbReference type="EMBL" id="AP008232">
    <property type="protein sequence ID" value="BAE75428.1"/>
    <property type="molecule type" value="Genomic_DNA"/>
</dbReference>
<dbReference type="RefSeq" id="WP_011411965.1">
    <property type="nucleotide sequence ID" value="NC_007712.1"/>
</dbReference>
<dbReference type="SMR" id="Q2NQZ7"/>
<dbReference type="STRING" id="343509.SG2153"/>
<dbReference type="KEGG" id="sgl:SG2153"/>
<dbReference type="eggNOG" id="COG0796">
    <property type="taxonomic scope" value="Bacteria"/>
</dbReference>
<dbReference type="HOGENOM" id="CLU_052344_2_0_6"/>
<dbReference type="OrthoDB" id="9801055at2"/>
<dbReference type="BioCyc" id="SGLO343509:SGP1_RS19895-MONOMER"/>
<dbReference type="UniPathway" id="UPA00219"/>
<dbReference type="Proteomes" id="UP000001932">
    <property type="component" value="Chromosome"/>
</dbReference>
<dbReference type="GO" id="GO:0008881">
    <property type="term" value="F:glutamate racemase activity"/>
    <property type="evidence" value="ECO:0007669"/>
    <property type="project" value="UniProtKB-UniRule"/>
</dbReference>
<dbReference type="GO" id="GO:0071555">
    <property type="term" value="P:cell wall organization"/>
    <property type="evidence" value="ECO:0007669"/>
    <property type="project" value="UniProtKB-KW"/>
</dbReference>
<dbReference type="GO" id="GO:0009252">
    <property type="term" value="P:peptidoglycan biosynthetic process"/>
    <property type="evidence" value="ECO:0007669"/>
    <property type="project" value="UniProtKB-UniRule"/>
</dbReference>
<dbReference type="GO" id="GO:0008360">
    <property type="term" value="P:regulation of cell shape"/>
    <property type="evidence" value="ECO:0007669"/>
    <property type="project" value="UniProtKB-KW"/>
</dbReference>
<dbReference type="FunFam" id="3.40.50.1860:FF:000001">
    <property type="entry name" value="Glutamate racemase"/>
    <property type="match status" value="1"/>
</dbReference>
<dbReference type="Gene3D" id="3.40.50.1860">
    <property type="match status" value="2"/>
</dbReference>
<dbReference type="HAMAP" id="MF_00258">
    <property type="entry name" value="Glu_racemase"/>
    <property type="match status" value="1"/>
</dbReference>
<dbReference type="InterPro" id="IPR015942">
    <property type="entry name" value="Asp/Glu/hydantoin_racemase"/>
</dbReference>
<dbReference type="InterPro" id="IPR001920">
    <property type="entry name" value="Asp/Glu_race"/>
</dbReference>
<dbReference type="InterPro" id="IPR018187">
    <property type="entry name" value="Asp/Glu_racemase_AS_1"/>
</dbReference>
<dbReference type="InterPro" id="IPR033134">
    <property type="entry name" value="Asp/Glu_racemase_AS_2"/>
</dbReference>
<dbReference type="InterPro" id="IPR004391">
    <property type="entry name" value="Glu_race"/>
</dbReference>
<dbReference type="NCBIfam" id="TIGR00067">
    <property type="entry name" value="glut_race"/>
    <property type="match status" value="1"/>
</dbReference>
<dbReference type="NCBIfam" id="NF002034">
    <property type="entry name" value="PRK00865.1-1"/>
    <property type="match status" value="1"/>
</dbReference>
<dbReference type="PANTHER" id="PTHR21198">
    <property type="entry name" value="GLUTAMATE RACEMASE"/>
    <property type="match status" value="1"/>
</dbReference>
<dbReference type="PANTHER" id="PTHR21198:SF2">
    <property type="entry name" value="GLUTAMATE RACEMASE"/>
    <property type="match status" value="1"/>
</dbReference>
<dbReference type="Pfam" id="PF01177">
    <property type="entry name" value="Asp_Glu_race"/>
    <property type="match status" value="1"/>
</dbReference>
<dbReference type="SUPFAM" id="SSF53681">
    <property type="entry name" value="Aspartate/glutamate racemase"/>
    <property type="match status" value="2"/>
</dbReference>
<dbReference type="PROSITE" id="PS00923">
    <property type="entry name" value="ASP_GLU_RACEMASE_1"/>
    <property type="match status" value="1"/>
</dbReference>
<dbReference type="PROSITE" id="PS00924">
    <property type="entry name" value="ASP_GLU_RACEMASE_2"/>
    <property type="match status" value="1"/>
</dbReference>
<feature type="chain" id="PRO_1000047613" description="Glutamate racemase">
    <location>
        <begin position="1"/>
        <end position="290"/>
    </location>
</feature>
<feature type="active site" description="Proton donor/acceptor" evidence="1">
    <location>
        <position position="96"/>
    </location>
</feature>
<feature type="active site" description="Proton donor/acceptor" evidence="1">
    <location>
        <position position="208"/>
    </location>
</feature>
<feature type="binding site" evidence="1">
    <location>
        <begin position="32"/>
        <end position="33"/>
    </location>
    <ligand>
        <name>substrate</name>
    </ligand>
</feature>
<feature type="binding site" evidence="1">
    <location>
        <begin position="64"/>
        <end position="65"/>
    </location>
    <ligand>
        <name>substrate</name>
    </ligand>
</feature>
<feature type="binding site" evidence="1">
    <location>
        <begin position="97"/>
        <end position="98"/>
    </location>
    <ligand>
        <name>substrate</name>
    </ligand>
</feature>
<feature type="binding site" evidence="1">
    <location>
        <begin position="209"/>
        <end position="210"/>
    </location>
    <ligand>
        <name>substrate</name>
    </ligand>
</feature>
<sequence length="290" mass="31495">MATRLQDGNSISPEPMLSDGSAAKRPTILVFDSGVGGLSIYNEVRQTLPNAHYLYVFDNEAFPYGEKPEQFIVDRVVAIVGAMWRQHKIDLVIVACNTASTISLPALRERFPCPIIGVVPAIKPAARLTRNGIVGLLATRATVQRSYTHDLISQYAGDCQILQLGTAELVDMAEARLHGELVPLPVLRKLLRPWLRAAEPPDTVVLGCTHFPLLSQELQAVLPEGTRLVDSGSAIARRAAWLVEHDMDVSSLQGETGPNKTYCLVTTPQAVALMPALTRYGFGSSGMLTL</sequence>
<accession>Q2NQZ7</accession>